<sequence>MLFNYLRKPNPTNLLTSPDSFRYFEYGMFCMGWHTPATHKIIYYITSCLIFAWCAVYLPIGIIISFKTDINTFTPNELLTVMQLFFNSVGMPFKVLFFNLYISGFYKAKKLLSEMDKRCTTLKERVEVHQGVVRCNKAYLIYQFIYTAYTISTFLSAALSGKLPWRIYNPFVDFRESRSSFWKAALNETALMLFAVTQTLMSDIYPLLYGLILRVHLKLLRLRVESLCTDSGKSDAENEQDLIKCIKDHNLIIDYAAAIRPAVTRTIFVQFLLIGICLGLSMINLLFFADIWTGLATVAYINGLMVQTFPFCFVCDLLKKDCELLVSAIFHSNWINSSRSYKSSLRYFLKNAQKSIAFTAGSIFPISTGSNIKVAKLAFSVVTFVNQLNIADRLTKN</sequence>
<gene>
    <name type="primary">Or98a</name>
    <name type="ORF">CG5540</name>
</gene>
<evidence type="ECO:0000250" key="1"/>
<evidence type="ECO:0000255" key="2"/>
<evidence type="ECO:0000269" key="3">
    <source>
    </source>
</evidence>
<evidence type="ECO:0000269" key="4">
    <source>
    </source>
</evidence>
<evidence type="ECO:0000305" key="5"/>
<keyword id="KW-1003">Cell membrane</keyword>
<keyword id="KW-0325">Glycoprotein</keyword>
<keyword id="KW-0472">Membrane</keyword>
<keyword id="KW-0552">Olfaction</keyword>
<keyword id="KW-0675">Receptor</keyword>
<keyword id="KW-1185">Reference proteome</keyword>
<keyword id="KW-0716">Sensory transduction</keyword>
<keyword id="KW-0807">Transducer</keyword>
<keyword id="KW-0812">Transmembrane</keyword>
<keyword id="KW-1133">Transmembrane helix</keyword>
<feature type="chain" id="PRO_0000174284" description="Odorant receptor 98a">
    <location>
        <begin position="1"/>
        <end position="397"/>
    </location>
</feature>
<feature type="topological domain" description="Cytoplasmic" evidence="2">
    <location>
        <begin position="1"/>
        <end position="43"/>
    </location>
</feature>
<feature type="transmembrane region" description="Helical; Name=1" evidence="2">
    <location>
        <begin position="44"/>
        <end position="64"/>
    </location>
</feature>
<feature type="topological domain" description="Extracellular" evidence="2">
    <location>
        <begin position="65"/>
        <end position="77"/>
    </location>
</feature>
<feature type="transmembrane region" description="Helical; Name=2" evidence="2">
    <location>
        <begin position="78"/>
        <end position="98"/>
    </location>
</feature>
<feature type="topological domain" description="Cytoplasmic" evidence="2">
    <location>
        <begin position="99"/>
        <end position="138"/>
    </location>
</feature>
<feature type="transmembrane region" description="Helical; Name=3" evidence="2">
    <location>
        <begin position="139"/>
        <end position="159"/>
    </location>
</feature>
<feature type="topological domain" description="Extracellular" evidence="2">
    <location>
        <begin position="160"/>
        <end position="192"/>
    </location>
</feature>
<feature type="transmembrane region" description="Helical; Name=4" evidence="2">
    <location>
        <begin position="193"/>
        <end position="213"/>
    </location>
</feature>
<feature type="topological domain" description="Cytoplasmic" evidence="2">
    <location>
        <begin position="214"/>
        <end position="266"/>
    </location>
</feature>
<feature type="transmembrane region" description="Helical; Name=5" evidence="2">
    <location>
        <begin position="267"/>
        <end position="287"/>
    </location>
</feature>
<feature type="topological domain" description="Extracellular" evidence="2">
    <location>
        <begin position="288"/>
        <end position="293"/>
    </location>
</feature>
<feature type="transmembrane region" description="Helical; Name=6" evidence="2">
    <location>
        <begin position="294"/>
        <end position="314"/>
    </location>
</feature>
<feature type="topological domain" description="Cytoplasmic" evidence="2">
    <location>
        <begin position="315"/>
        <end position="354"/>
    </location>
</feature>
<feature type="transmembrane region" description="Helical; Name=7" evidence="2">
    <location>
        <begin position="355"/>
        <end position="375"/>
    </location>
</feature>
<feature type="topological domain" description="Extracellular" evidence="2">
    <location>
        <begin position="376"/>
        <end position="397"/>
    </location>
</feature>
<feature type="glycosylation site" description="N-linked (GlcNAc...) asparagine" evidence="2">
    <location>
        <position position="187"/>
    </location>
</feature>
<reference key="1">
    <citation type="journal article" date="2000" name="Science">
        <title>The genome sequence of Drosophila melanogaster.</title>
        <authorList>
            <person name="Adams M.D."/>
            <person name="Celniker S.E."/>
            <person name="Holt R.A."/>
            <person name="Evans C.A."/>
            <person name="Gocayne J.D."/>
            <person name="Amanatides P.G."/>
            <person name="Scherer S.E."/>
            <person name="Li P.W."/>
            <person name="Hoskins R.A."/>
            <person name="Galle R.F."/>
            <person name="George R.A."/>
            <person name="Lewis S.E."/>
            <person name="Richards S."/>
            <person name="Ashburner M."/>
            <person name="Henderson S.N."/>
            <person name="Sutton G.G."/>
            <person name="Wortman J.R."/>
            <person name="Yandell M.D."/>
            <person name="Zhang Q."/>
            <person name="Chen L.X."/>
            <person name="Brandon R.C."/>
            <person name="Rogers Y.-H.C."/>
            <person name="Blazej R.G."/>
            <person name="Champe M."/>
            <person name="Pfeiffer B.D."/>
            <person name="Wan K.H."/>
            <person name="Doyle C."/>
            <person name="Baxter E.G."/>
            <person name="Helt G."/>
            <person name="Nelson C.R."/>
            <person name="Miklos G.L.G."/>
            <person name="Abril J.F."/>
            <person name="Agbayani A."/>
            <person name="An H.-J."/>
            <person name="Andrews-Pfannkoch C."/>
            <person name="Baldwin D."/>
            <person name="Ballew R.M."/>
            <person name="Basu A."/>
            <person name="Baxendale J."/>
            <person name="Bayraktaroglu L."/>
            <person name="Beasley E.M."/>
            <person name="Beeson K.Y."/>
            <person name="Benos P.V."/>
            <person name="Berman B.P."/>
            <person name="Bhandari D."/>
            <person name="Bolshakov S."/>
            <person name="Borkova D."/>
            <person name="Botchan M.R."/>
            <person name="Bouck J."/>
            <person name="Brokstein P."/>
            <person name="Brottier P."/>
            <person name="Burtis K.C."/>
            <person name="Busam D.A."/>
            <person name="Butler H."/>
            <person name="Cadieu E."/>
            <person name="Center A."/>
            <person name="Chandra I."/>
            <person name="Cherry J.M."/>
            <person name="Cawley S."/>
            <person name="Dahlke C."/>
            <person name="Davenport L.B."/>
            <person name="Davies P."/>
            <person name="de Pablos B."/>
            <person name="Delcher A."/>
            <person name="Deng Z."/>
            <person name="Mays A.D."/>
            <person name="Dew I."/>
            <person name="Dietz S.M."/>
            <person name="Dodson K."/>
            <person name="Doup L.E."/>
            <person name="Downes M."/>
            <person name="Dugan-Rocha S."/>
            <person name="Dunkov B.C."/>
            <person name="Dunn P."/>
            <person name="Durbin K.J."/>
            <person name="Evangelista C.C."/>
            <person name="Ferraz C."/>
            <person name="Ferriera S."/>
            <person name="Fleischmann W."/>
            <person name="Fosler C."/>
            <person name="Gabrielian A.E."/>
            <person name="Garg N.S."/>
            <person name="Gelbart W.M."/>
            <person name="Glasser K."/>
            <person name="Glodek A."/>
            <person name="Gong F."/>
            <person name="Gorrell J.H."/>
            <person name="Gu Z."/>
            <person name="Guan P."/>
            <person name="Harris M."/>
            <person name="Harris N.L."/>
            <person name="Harvey D.A."/>
            <person name="Heiman T.J."/>
            <person name="Hernandez J.R."/>
            <person name="Houck J."/>
            <person name="Hostin D."/>
            <person name="Houston K.A."/>
            <person name="Howland T.J."/>
            <person name="Wei M.-H."/>
            <person name="Ibegwam C."/>
            <person name="Jalali M."/>
            <person name="Kalush F."/>
            <person name="Karpen G.H."/>
            <person name="Ke Z."/>
            <person name="Kennison J.A."/>
            <person name="Ketchum K.A."/>
            <person name="Kimmel B.E."/>
            <person name="Kodira C.D."/>
            <person name="Kraft C.L."/>
            <person name="Kravitz S."/>
            <person name="Kulp D."/>
            <person name="Lai Z."/>
            <person name="Lasko P."/>
            <person name="Lei Y."/>
            <person name="Levitsky A.A."/>
            <person name="Li J.H."/>
            <person name="Li Z."/>
            <person name="Liang Y."/>
            <person name="Lin X."/>
            <person name="Liu X."/>
            <person name="Mattei B."/>
            <person name="McIntosh T.C."/>
            <person name="McLeod M.P."/>
            <person name="McPherson D."/>
            <person name="Merkulov G."/>
            <person name="Milshina N.V."/>
            <person name="Mobarry C."/>
            <person name="Morris J."/>
            <person name="Moshrefi A."/>
            <person name="Mount S.M."/>
            <person name="Moy M."/>
            <person name="Murphy B."/>
            <person name="Murphy L."/>
            <person name="Muzny D.M."/>
            <person name="Nelson D.L."/>
            <person name="Nelson D.R."/>
            <person name="Nelson K.A."/>
            <person name="Nixon K."/>
            <person name="Nusskern D.R."/>
            <person name="Pacleb J.M."/>
            <person name="Palazzolo M."/>
            <person name="Pittman G.S."/>
            <person name="Pan S."/>
            <person name="Pollard J."/>
            <person name="Puri V."/>
            <person name="Reese M.G."/>
            <person name="Reinert K."/>
            <person name="Remington K."/>
            <person name="Saunders R.D.C."/>
            <person name="Scheeler F."/>
            <person name="Shen H."/>
            <person name="Shue B.C."/>
            <person name="Siden-Kiamos I."/>
            <person name="Simpson M."/>
            <person name="Skupski M.P."/>
            <person name="Smith T.J."/>
            <person name="Spier E."/>
            <person name="Spradling A.C."/>
            <person name="Stapleton M."/>
            <person name="Strong R."/>
            <person name="Sun E."/>
            <person name="Svirskas R."/>
            <person name="Tector C."/>
            <person name="Turner R."/>
            <person name="Venter E."/>
            <person name="Wang A.H."/>
            <person name="Wang X."/>
            <person name="Wang Z.-Y."/>
            <person name="Wassarman D.A."/>
            <person name="Weinstock G.M."/>
            <person name="Weissenbach J."/>
            <person name="Williams S.M."/>
            <person name="Woodage T."/>
            <person name="Worley K.C."/>
            <person name="Wu D."/>
            <person name="Yang S."/>
            <person name="Yao Q.A."/>
            <person name="Ye J."/>
            <person name="Yeh R.-F."/>
            <person name="Zaveri J.S."/>
            <person name="Zhan M."/>
            <person name="Zhang G."/>
            <person name="Zhao Q."/>
            <person name="Zheng L."/>
            <person name="Zheng X.H."/>
            <person name="Zhong F.N."/>
            <person name="Zhong W."/>
            <person name="Zhou X."/>
            <person name="Zhu S.C."/>
            <person name="Zhu X."/>
            <person name="Smith H.O."/>
            <person name="Gibbs R.A."/>
            <person name="Myers E.W."/>
            <person name="Rubin G.M."/>
            <person name="Venter J.C."/>
        </authorList>
    </citation>
    <scope>NUCLEOTIDE SEQUENCE [LARGE SCALE GENOMIC DNA]</scope>
    <source>
        <strain>Berkeley</strain>
    </source>
</reference>
<reference key="2">
    <citation type="journal article" date="2002" name="Genome Biol.">
        <title>Annotation of the Drosophila melanogaster euchromatic genome: a systematic review.</title>
        <authorList>
            <person name="Misra S."/>
            <person name="Crosby M.A."/>
            <person name="Mungall C.J."/>
            <person name="Matthews B.B."/>
            <person name="Campbell K.S."/>
            <person name="Hradecky P."/>
            <person name="Huang Y."/>
            <person name="Kaminker J.S."/>
            <person name="Millburn G.H."/>
            <person name="Prochnik S.E."/>
            <person name="Smith C.D."/>
            <person name="Tupy J.L."/>
            <person name="Whitfield E.J."/>
            <person name="Bayraktaroglu L."/>
            <person name="Berman B.P."/>
            <person name="Bettencourt B.R."/>
            <person name="Celniker S.E."/>
            <person name="de Grey A.D.N.J."/>
            <person name="Drysdale R.A."/>
            <person name="Harris N.L."/>
            <person name="Richter J."/>
            <person name="Russo S."/>
            <person name="Schroeder A.J."/>
            <person name="Shu S.Q."/>
            <person name="Stapleton M."/>
            <person name="Yamada C."/>
            <person name="Ashburner M."/>
            <person name="Gelbart W.M."/>
            <person name="Rubin G.M."/>
            <person name="Lewis S.E."/>
        </authorList>
    </citation>
    <scope>GENOME REANNOTATION</scope>
    <source>
        <strain>Berkeley</strain>
    </source>
</reference>
<reference key="3">
    <citation type="journal article" date="2000" name="Cell">
        <title>An olfactory sensory map in the fly brain.</title>
        <authorList>
            <person name="Vosshall L.B."/>
            <person name="Wong A.M."/>
            <person name="Axel R."/>
        </authorList>
    </citation>
    <scope>TISSUE SPECIFICITY</scope>
</reference>
<reference key="4">
    <citation type="journal article" date="2006" name="Cell">
        <title>Coding of odors by a receptor repertoire.</title>
        <authorList>
            <person name="Hallem E.A."/>
            <person name="Carlson J.R."/>
        </authorList>
    </citation>
    <scope>FUNCTION</scope>
</reference>
<dbReference type="EMBL" id="AE014297">
    <property type="protein sequence ID" value="AAF56753.2"/>
    <property type="molecule type" value="Genomic_DNA"/>
</dbReference>
<dbReference type="RefSeq" id="NP_524536.2">
    <property type="nucleotide sequence ID" value="NM_079812.2"/>
</dbReference>
<dbReference type="SMR" id="Q9VAZ3"/>
<dbReference type="FunCoup" id="Q9VAZ3">
    <property type="interactions" value="31"/>
</dbReference>
<dbReference type="STRING" id="7227.FBpp0084595"/>
<dbReference type="GlyCosmos" id="Q9VAZ3">
    <property type="glycosylation" value="1 site, No reported glycans"/>
</dbReference>
<dbReference type="GlyGen" id="Q9VAZ3">
    <property type="glycosylation" value="1 site"/>
</dbReference>
<dbReference type="PaxDb" id="7227-FBpp0084595"/>
<dbReference type="EnsemblMetazoa" id="FBtr0085226">
    <property type="protein sequence ID" value="FBpp0084595"/>
    <property type="gene ID" value="FBgn0039551"/>
</dbReference>
<dbReference type="GeneID" id="43341"/>
<dbReference type="KEGG" id="dme:Dmel_CG5540"/>
<dbReference type="AGR" id="FB:FBgn0039551"/>
<dbReference type="CTD" id="43341"/>
<dbReference type="FlyBase" id="FBgn0039551">
    <property type="gene designation" value="Or98a"/>
</dbReference>
<dbReference type="VEuPathDB" id="VectorBase:FBgn0039551"/>
<dbReference type="GeneTree" id="ENSGT00540000073151"/>
<dbReference type="HOGENOM" id="CLU_033399_8_0_1"/>
<dbReference type="InParanoid" id="Q9VAZ3"/>
<dbReference type="OMA" id="KYLEYGM"/>
<dbReference type="OrthoDB" id="6604226at2759"/>
<dbReference type="PhylomeDB" id="Q9VAZ3"/>
<dbReference type="BioGRID-ORCS" id="43341">
    <property type="hits" value="0 hits in 1 CRISPR screen"/>
</dbReference>
<dbReference type="GenomeRNAi" id="43341"/>
<dbReference type="PRO" id="PR:Q9VAZ3"/>
<dbReference type="Proteomes" id="UP000000803">
    <property type="component" value="Chromosome 3R"/>
</dbReference>
<dbReference type="Bgee" id="FBgn0039551">
    <property type="expression patterns" value="Expressed in antenna and 1 other cell type or tissue"/>
</dbReference>
<dbReference type="ExpressionAtlas" id="Q9VAZ3">
    <property type="expression patterns" value="baseline and differential"/>
</dbReference>
<dbReference type="GO" id="GO:0032590">
    <property type="term" value="C:dendrite membrane"/>
    <property type="evidence" value="ECO:0000250"/>
    <property type="project" value="FlyBase"/>
</dbReference>
<dbReference type="GO" id="GO:0005886">
    <property type="term" value="C:plasma membrane"/>
    <property type="evidence" value="ECO:0007005"/>
    <property type="project" value="FlyBase"/>
</dbReference>
<dbReference type="GO" id="GO:0170020">
    <property type="term" value="F:ionotropic olfactory receptor activity"/>
    <property type="evidence" value="ECO:0000314"/>
    <property type="project" value="FlyBase"/>
</dbReference>
<dbReference type="GO" id="GO:0099604">
    <property type="term" value="F:ligand-gated calcium channel activity"/>
    <property type="evidence" value="ECO:0000314"/>
    <property type="project" value="FlyBase"/>
</dbReference>
<dbReference type="GO" id="GO:0005549">
    <property type="term" value="F:odorant binding"/>
    <property type="evidence" value="ECO:0000250"/>
    <property type="project" value="FlyBase"/>
</dbReference>
<dbReference type="GO" id="GO:0004984">
    <property type="term" value="F:olfactory receptor activity"/>
    <property type="evidence" value="ECO:0000318"/>
    <property type="project" value="GO_Central"/>
</dbReference>
<dbReference type="GO" id="GO:0070588">
    <property type="term" value="P:calcium ion transmembrane transport"/>
    <property type="evidence" value="ECO:0000314"/>
    <property type="project" value="FlyBase"/>
</dbReference>
<dbReference type="GO" id="GO:0050911">
    <property type="term" value="P:detection of chemical stimulus involved in sensory perception of smell"/>
    <property type="evidence" value="ECO:0000314"/>
    <property type="project" value="FlyBase"/>
</dbReference>
<dbReference type="InterPro" id="IPR004117">
    <property type="entry name" value="7tm6_olfct_rcpt"/>
</dbReference>
<dbReference type="PANTHER" id="PTHR21137">
    <property type="entry name" value="ODORANT RECEPTOR"/>
    <property type="match status" value="1"/>
</dbReference>
<dbReference type="PANTHER" id="PTHR21137:SF35">
    <property type="entry name" value="ODORANT RECEPTOR 19A-RELATED"/>
    <property type="match status" value="1"/>
</dbReference>
<dbReference type="Pfam" id="PF02949">
    <property type="entry name" value="7tm_6"/>
    <property type="match status" value="1"/>
</dbReference>
<protein>
    <recommendedName>
        <fullName>Odorant receptor 98a</fullName>
    </recommendedName>
</protein>
<proteinExistence type="evidence at transcript level"/>
<comment type="function">
    <text evidence="4">Odorant receptor which mediates acceptance or avoidance behavior, depending on its substrates. The odorant receptor repertoire encodes a large collection of odor stimuli that vary widely in identity, intensity, and duration. May form a complex with Orco to form odorant-sensing units, providing sensitive and prolonged odorant signaling and calcium permeability.</text>
</comment>
<comment type="subunit">
    <text evidence="1">Interacts with Orco. Complexes exist early in the endomembrane system in olfactory sensory neurons (OSNs), coupling these complexes to the conserved ciliary trafficking pathway (By similarity).</text>
</comment>
<comment type="subcellular location">
    <subcellularLocation>
        <location evidence="1">Cell membrane</location>
        <topology evidence="1">Multi-pass membrane protein</topology>
    </subcellularLocation>
</comment>
<comment type="tissue specificity">
    <text evidence="3">Expressed in olfactory sensory neurons in the antenna.</text>
</comment>
<comment type="miscellaneous">
    <text>The atypical heteromeric and topological design of the odorant receptors appears to be an insect-specific solution for odor recognition, making the OR/Orco complex an attractive target for the development of highly selective insect repellents to disrupt olfactory-mediated host-seeking behaviors of insect disease vectors. Odor-evoked OR currents are independent of known G-protein-coupled second messenger pathways.</text>
</comment>
<comment type="similarity">
    <text evidence="5">Belongs to the insect chemoreceptor superfamily. Heteromeric odorant receptor channel (TC 1.A.69) family. Or2a subfamily.</text>
</comment>
<name>OR98A_DROME</name>
<accession>Q9VAZ3</accession>
<organism>
    <name type="scientific">Drosophila melanogaster</name>
    <name type="common">Fruit fly</name>
    <dbReference type="NCBI Taxonomy" id="7227"/>
    <lineage>
        <taxon>Eukaryota</taxon>
        <taxon>Metazoa</taxon>
        <taxon>Ecdysozoa</taxon>
        <taxon>Arthropoda</taxon>
        <taxon>Hexapoda</taxon>
        <taxon>Insecta</taxon>
        <taxon>Pterygota</taxon>
        <taxon>Neoptera</taxon>
        <taxon>Endopterygota</taxon>
        <taxon>Diptera</taxon>
        <taxon>Brachycera</taxon>
        <taxon>Muscomorpha</taxon>
        <taxon>Ephydroidea</taxon>
        <taxon>Drosophilidae</taxon>
        <taxon>Drosophila</taxon>
        <taxon>Sophophora</taxon>
    </lineage>
</organism>